<evidence type="ECO:0000255" key="1">
    <source>
        <dbReference type="HAMAP-Rule" id="MF_00440"/>
    </source>
</evidence>
<reference key="1">
    <citation type="submission" date="2008-06" db="EMBL/GenBank/DDBJ databases">
        <title>Complete sequence of Stenotrophomonas maltophilia R551-3.</title>
        <authorList>
            <consortium name="US DOE Joint Genome Institute"/>
            <person name="Lucas S."/>
            <person name="Copeland A."/>
            <person name="Lapidus A."/>
            <person name="Glavina del Rio T."/>
            <person name="Dalin E."/>
            <person name="Tice H."/>
            <person name="Pitluck S."/>
            <person name="Chain P."/>
            <person name="Malfatti S."/>
            <person name="Shin M."/>
            <person name="Vergez L."/>
            <person name="Lang D."/>
            <person name="Schmutz J."/>
            <person name="Larimer F."/>
            <person name="Land M."/>
            <person name="Hauser L."/>
            <person name="Kyrpides N."/>
            <person name="Mikhailova N."/>
            <person name="Taghavi S."/>
            <person name="Monchy S."/>
            <person name="Newman L."/>
            <person name="Vangronsveld J."/>
            <person name="van der Lelie D."/>
            <person name="Richardson P."/>
        </authorList>
    </citation>
    <scope>NUCLEOTIDE SEQUENCE [LARGE SCALE GENOMIC DNA]</scope>
    <source>
        <strain>R551-3</strain>
    </source>
</reference>
<organism>
    <name type="scientific">Stenotrophomonas maltophilia (strain R551-3)</name>
    <dbReference type="NCBI Taxonomy" id="391008"/>
    <lineage>
        <taxon>Bacteria</taxon>
        <taxon>Pseudomonadati</taxon>
        <taxon>Pseudomonadota</taxon>
        <taxon>Gammaproteobacteria</taxon>
        <taxon>Lysobacterales</taxon>
        <taxon>Lysobacteraceae</taxon>
        <taxon>Stenotrophomonas</taxon>
        <taxon>Stenotrophomonas maltophilia group</taxon>
    </lineage>
</organism>
<comment type="function">
    <text evidence="1">Negatively regulates transcription of bacterial ribonucleotide reductase nrd genes and operons by binding to NrdR-boxes.</text>
</comment>
<comment type="cofactor">
    <cofactor evidence="1">
        <name>Zn(2+)</name>
        <dbReference type="ChEBI" id="CHEBI:29105"/>
    </cofactor>
    <text evidence="1">Binds 1 zinc ion.</text>
</comment>
<comment type="similarity">
    <text evidence="1">Belongs to the NrdR family.</text>
</comment>
<keyword id="KW-0067">ATP-binding</keyword>
<keyword id="KW-0238">DNA-binding</keyword>
<keyword id="KW-0479">Metal-binding</keyword>
<keyword id="KW-0547">Nucleotide-binding</keyword>
<keyword id="KW-0678">Repressor</keyword>
<keyword id="KW-0804">Transcription</keyword>
<keyword id="KW-0805">Transcription regulation</keyword>
<keyword id="KW-0862">Zinc</keyword>
<keyword id="KW-0863">Zinc-finger</keyword>
<accession>B4SJB3</accession>
<gene>
    <name evidence="1" type="primary">nrdR</name>
    <name type="ordered locus">Smal_0576</name>
</gene>
<protein>
    <recommendedName>
        <fullName evidence="1">Transcriptional repressor NrdR</fullName>
    </recommendedName>
</protein>
<proteinExistence type="inferred from homology"/>
<feature type="chain" id="PRO_1000124553" description="Transcriptional repressor NrdR">
    <location>
        <begin position="1"/>
        <end position="173"/>
    </location>
</feature>
<feature type="domain" description="ATP-cone" evidence="1">
    <location>
        <begin position="49"/>
        <end position="139"/>
    </location>
</feature>
<feature type="zinc finger region" evidence="1">
    <location>
        <begin position="3"/>
        <end position="34"/>
    </location>
</feature>
<sequence>MHCPFCQHADTRVIDSRVSEDGATIRRRRECEACGERFSTMETVELKLPAIVKSDGTREAFDQRKVRAGFDRALQKRAVAEDKIEAAVRAVVHQLRISGEREVPSIKVGEFVMNELRKLDHVGYVRFASVYRSFEDVADFREEIEKLERDLPSSTEQLQLLGDVIALTKKKKG</sequence>
<dbReference type="EMBL" id="CP001111">
    <property type="protein sequence ID" value="ACF50281.1"/>
    <property type="molecule type" value="Genomic_DNA"/>
</dbReference>
<dbReference type="RefSeq" id="WP_004143350.1">
    <property type="nucleotide sequence ID" value="NC_011071.1"/>
</dbReference>
<dbReference type="SMR" id="B4SJB3"/>
<dbReference type="STRING" id="391008.Smal_0576"/>
<dbReference type="GeneID" id="93831761"/>
<dbReference type="KEGG" id="smt:Smal_0576"/>
<dbReference type="eggNOG" id="COG1327">
    <property type="taxonomic scope" value="Bacteria"/>
</dbReference>
<dbReference type="HOGENOM" id="CLU_108412_0_0_6"/>
<dbReference type="OrthoDB" id="9807461at2"/>
<dbReference type="Proteomes" id="UP000001867">
    <property type="component" value="Chromosome"/>
</dbReference>
<dbReference type="GO" id="GO:0005524">
    <property type="term" value="F:ATP binding"/>
    <property type="evidence" value="ECO:0007669"/>
    <property type="project" value="UniProtKB-KW"/>
</dbReference>
<dbReference type="GO" id="GO:0003677">
    <property type="term" value="F:DNA binding"/>
    <property type="evidence" value="ECO:0007669"/>
    <property type="project" value="UniProtKB-KW"/>
</dbReference>
<dbReference type="GO" id="GO:0008270">
    <property type="term" value="F:zinc ion binding"/>
    <property type="evidence" value="ECO:0007669"/>
    <property type="project" value="UniProtKB-UniRule"/>
</dbReference>
<dbReference type="GO" id="GO:0045892">
    <property type="term" value="P:negative regulation of DNA-templated transcription"/>
    <property type="evidence" value="ECO:0007669"/>
    <property type="project" value="UniProtKB-UniRule"/>
</dbReference>
<dbReference type="HAMAP" id="MF_00440">
    <property type="entry name" value="NrdR"/>
    <property type="match status" value="1"/>
</dbReference>
<dbReference type="InterPro" id="IPR005144">
    <property type="entry name" value="ATP-cone_dom"/>
</dbReference>
<dbReference type="InterPro" id="IPR055173">
    <property type="entry name" value="NrdR-like_N"/>
</dbReference>
<dbReference type="InterPro" id="IPR003796">
    <property type="entry name" value="RNR_NrdR-like"/>
</dbReference>
<dbReference type="NCBIfam" id="TIGR00244">
    <property type="entry name" value="transcriptional regulator NrdR"/>
    <property type="match status" value="1"/>
</dbReference>
<dbReference type="PANTHER" id="PTHR30455">
    <property type="entry name" value="TRANSCRIPTIONAL REPRESSOR NRDR"/>
    <property type="match status" value="1"/>
</dbReference>
<dbReference type="PANTHER" id="PTHR30455:SF2">
    <property type="entry name" value="TRANSCRIPTIONAL REPRESSOR NRDR"/>
    <property type="match status" value="1"/>
</dbReference>
<dbReference type="Pfam" id="PF03477">
    <property type="entry name" value="ATP-cone"/>
    <property type="match status" value="1"/>
</dbReference>
<dbReference type="Pfam" id="PF22811">
    <property type="entry name" value="Zn_ribbon_NrdR"/>
    <property type="match status" value="1"/>
</dbReference>
<dbReference type="PROSITE" id="PS51161">
    <property type="entry name" value="ATP_CONE"/>
    <property type="match status" value="1"/>
</dbReference>
<name>NRDR_STRM5</name>